<evidence type="ECO:0000250" key="1">
    <source>
        <dbReference type="UniProtKB" id="Q5XKP0"/>
    </source>
</evidence>
<evidence type="ECO:0000255" key="2"/>
<evidence type="ECO:0000305" key="3"/>
<proteinExistence type="inferred from homology"/>
<comment type="function">
    <text evidence="1">Component of the MICOS complex, a large protein complex of the mitochondrial inner membrane that plays crucial roles in the maintenance of crista junctions, inner membrane architecture, and formation of contact sites to the outer membrane. Constituent of mature MICOS complex, it is required for the formation of cristae junction (CJ) and maintenance of cristae morphology. Required for the incorporation of MICOS10/MIC10 into the MICOS complex.</text>
</comment>
<comment type="subunit">
    <text evidence="1">Component of the mitochondrial contact site and cristae organizing system (MICOS) complex, composed of at least MICOS10/MIC10, CHCHD3/MIC19, CHCHD6/MIC25, APOO/MIC26, MICOS13/MIC13, APOOL/MIC27 and IMMT/MIC60. The MICOS complex associates with mitochondrial outer membrane proteins SAMM50, MTX1 and MTX2 (together described as components of the mitochondrial outer membrane sorting assembly machinery (SAM) complex) and DNAJC11, mitochondrial inner membrane protein TMEM11 and with HSPA9. The MICOS and SAM complexes together with DNAJC11 are part of a large protein complex spanning both membranes termed the mitochondrial intermembrane space bridging (MIB) complex.</text>
</comment>
<comment type="subcellular location">
    <subcellularLocation>
        <location evidence="1">Mitochondrion inner membrane</location>
        <topology evidence="2">Single-pass membrane protein</topology>
    </subcellularLocation>
    <text evidence="1">Enriched at crista junctions.</text>
</comment>
<comment type="similarity">
    <text evidence="3">Belongs to the MICOS complex subunit Mic13 family.</text>
</comment>
<gene>
    <name evidence="1" type="primary">MICOS13</name>
    <name type="synonym">QIL1</name>
</gene>
<protein>
    <recommendedName>
        <fullName evidence="1">MICOS complex subunit MIC13</fullName>
    </recommendedName>
</protein>
<keyword id="KW-0472">Membrane</keyword>
<keyword id="KW-0496">Mitochondrion</keyword>
<keyword id="KW-0999">Mitochondrion inner membrane</keyword>
<keyword id="KW-1185">Reference proteome</keyword>
<keyword id="KW-0812">Transmembrane</keyword>
<keyword id="KW-1133">Transmembrane helix</keyword>
<reference key="1">
    <citation type="submission" date="2006-05" db="EMBL/GenBank/DDBJ databases">
        <title>Generation and analysis of cDNA sequences derived from a porcine skeletal muscle library.</title>
        <authorList>
            <person name="Cai G."/>
            <person name="Chen Y."/>
            <person name="Wang C."/>
            <person name="Li J."/>
            <person name="Peng G."/>
            <person name="Zhang H."/>
        </authorList>
    </citation>
    <scope>NUCLEOTIDE SEQUENCE [LARGE SCALE MRNA]</scope>
    <source>
        <tissue>Longissimus dorsi muscle</tissue>
    </source>
</reference>
<organism>
    <name type="scientific">Sus scrofa</name>
    <name type="common">Pig</name>
    <dbReference type="NCBI Taxonomy" id="9823"/>
    <lineage>
        <taxon>Eukaryota</taxon>
        <taxon>Metazoa</taxon>
        <taxon>Chordata</taxon>
        <taxon>Craniata</taxon>
        <taxon>Vertebrata</taxon>
        <taxon>Euteleostomi</taxon>
        <taxon>Mammalia</taxon>
        <taxon>Eutheria</taxon>
        <taxon>Laurasiatheria</taxon>
        <taxon>Artiodactyla</taxon>
        <taxon>Suina</taxon>
        <taxon>Suidae</taxon>
        <taxon>Sus</taxon>
    </lineage>
</organism>
<name>MIC13_PIG</name>
<accession>A1XQR7</accession>
<feature type="chain" id="PRO_0000289988" description="MICOS complex subunit MIC13">
    <location>
        <begin position="1"/>
        <end position="118"/>
    </location>
</feature>
<feature type="topological domain" description="Mitochondrial matrix" evidence="3">
    <location>
        <begin position="1"/>
        <end position="7"/>
    </location>
</feature>
<feature type="transmembrane region" description="Helical" evidence="2">
    <location>
        <begin position="8"/>
        <end position="26"/>
    </location>
</feature>
<feature type="topological domain" description="Mitochondrial intermembrane" evidence="3">
    <location>
        <begin position="27"/>
        <end position="118"/>
    </location>
</feature>
<sequence length="118" mass="13322">MVPRVWSLMRFLIKGSVAGGAIYLVYDQDPLGPSDKSQAALQKAEEVVPPAVYQFSQYVCEQTGLKIPQLPAPPKFNFHIRDYWNSGVIKVMSALSVAPSKAREYSKEGWEYLKERTK</sequence>
<dbReference type="EMBL" id="DQ629138">
    <property type="protein sequence ID" value="ABK55623.1"/>
    <property type="molecule type" value="mRNA"/>
</dbReference>
<dbReference type="RefSeq" id="NP_001090932.1">
    <property type="nucleotide sequence ID" value="NM_001097463.2"/>
</dbReference>
<dbReference type="FunCoup" id="A1XQR7">
    <property type="interactions" value="298"/>
</dbReference>
<dbReference type="STRING" id="9823.ENSSSCP00000014371"/>
<dbReference type="PaxDb" id="9823-ENSSSCP00000014371"/>
<dbReference type="PeptideAtlas" id="A1XQR7"/>
<dbReference type="GeneID" id="100037978"/>
<dbReference type="KEGG" id="ssc:100037978"/>
<dbReference type="CTD" id="125988"/>
<dbReference type="eggNOG" id="ENOG502S4BC">
    <property type="taxonomic scope" value="Eukaryota"/>
</dbReference>
<dbReference type="InParanoid" id="A1XQR7"/>
<dbReference type="OrthoDB" id="5948578at2759"/>
<dbReference type="Proteomes" id="UP000008227">
    <property type="component" value="Unplaced"/>
</dbReference>
<dbReference type="Proteomes" id="UP000314985">
    <property type="component" value="Unplaced"/>
</dbReference>
<dbReference type="Proteomes" id="UP000694570">
    <property type="component" value="Unplaced"/>
</dbReference>
<dbReference type="Proteomes" id="UP000694571">
    <property type="component" value="Unplaced"/>
</dbReference>
<dbReference type="Proteomes" id="UP000694720">
    <property type="component" value="Unplaced"/>
</dbReference>
<dbReference type="Proteomes" id="UP000694722">
    <property type="component" value="Unplaced"/>
</dbReference>
<dbReference type="Proteomes" id="UP000694723">
    <property type="component" value="Unplaced"/>
</dbReference>
<dbReference type="Proteomes" id="UP000694724">
    <property type="component" value="Unplaced"/>
</dbReference>
<dbReference type="Proteomes" id="UP000694725">
    <property type="component" value="Unplaced"/>
</dbReference>
<dbReference type="Proteomes" id="UP000694726">
    <property type="component" value="Unplaced"/>
</dbReference>
<dbReference type="Proteomes" id="UP000694727">
    <property type="component" value="Unplaced"/>
</dbReference>
<dbReference type="Proteomes" id="UP000694728">
    <property type="component" value="Unplaced"/>
</dbReference>
<dbReference type="GO" id="GO:0061617">
    <property type="term" value="C:MICOS complex"/>
    <property type="evidence" value="ECO:0000250"/>
    <property type="project" value="UniProtKB"/>
</dbReference>
<dbReference type="GO" id="GO:0044284">
    <property type="term" value="C:mitochondrial crista junction"/>
    <property type="evidence" value="ECO:0000250"/>
    <property type="project" value="UniProtKB"/>
</dbReference>
<dbReference type="GO" id="GO:0005743">
    <property type="term" value="C:mitochondrial inner membrane"/>
    <property type="evidence" value="ECO:0000250"/>
    <property type="project" value="UniProtKB"/>
</dbReference>
<dbReference type="GO" id="GO:0042407">
    <property type="term" value="P:cristae formation"/>
    <property type="evidence" value="ECO:0000250"/>
    <property type="project" value="UniProtKB"/>
</dbReference>
<dbReference type="InterPro" id="IPR026769">
    <property type="entry name" value="Mic13"/>
</dbReference>
<dbReference type="PANTHER" id="PTHR31816">
    <property type="entry name" value="MICOS COMPLEX SUBUNIT MIC13"/>
    <property type="match status" value="1"/>
</dbReference>
<dbReference type="PANTHER" id="PTHR31816:SF3">
    <property type="entry name" value="MICOS COMPLEX SUBUNIT MIC13"/>
    <property type="match status" value="1"/>
</dbReference>
<dbReference type="Pfam" id="PF15884">
    <property type="entry name" value="QIL1"/>
    <property type="match status" value="1"/>
</dbReference>